<comment type="function">
    <text evidence="2">Negative regulation of glyA transcription and kinB-dependent sporulation.</text>
</comment>
<sequence>MIDEIDKKILDELSKNSRLTMKKLGEKVHLTAPATASRVVKLIDNGIIKGCSIEVNQVKLGFSIHAFLNIYIEKIHHQPYLAFIETQDNYVINNYKVSGDGCYLLECKFPSNEVLDQFLNDLNKHANYKVSIVIGK</sequence>
<keyword id="KW-0238">DNA-binding</keyword>
<keyword id="KW-1185">Reference proteome</keyword>
<keyword id="KW-0678">Repressor</keyword>
<keyword id="KW-0804">Transcription</keyword>
<keyword id="KW-0805">Transcription regulation</keyword>
<name>LRPA_BACSU</name>
<gene>
    <name type="primary">lrpA</name>
    <name type="synonym">yddO</name>
    <name type="ordered locus">BSU05050</name>
</gene>
<organism>
    <name type="scientific">Bacillus subtilis (strain 168)</name>
    <dbReference type="NCBI Taxonomy" id="224308"/>
    <lineage>
        <taxon>Bacteria</taxon>
        <taxon>Bacillati</taxon>
        <taxon>Bacillota</taxon>
        <taxon>Bacilli</taxon>
        <taxon>Bacillales</taxon>
        <taxon>Bacillaceae</taxon>
        <taxon>Bacillus</taxon>
    </lineage>
</organism>
<reference key="1">
    <citation type="journal article" date="1997" name="Mol. Microbiol.">
        <title>Alterations in the flow of one-carbon units affect KinB-dependent sporulation in Bacillus subtilis.</title>
        <authorList>
            <person name="Dartois V."/>
            <person name="Liu J."/>
            <person name="Hoch J.A."/>
        </authorList>
    </citation>
    <scope>NUCLEOTIDE SEQUENCE [GENOMIC DNA]</scope>
    <scope>FUNCTION</scope>
    <source>
        <strain>168 / Marburg / ATCC 6051 / DSM 10 / JCM 1465 / NBRC 13719 / NCIMB 3610 / NRRL NRS-744 / VKM B-501</strain>
    </source>
</reference>
<reference key="2">
    <citation type="submission" date="1997-03" db="EMBL/GenBank/DDBJ databases">
        <title>A 148 kbp sequence of the region between 35 and 47 degree of the Bacillus subtilis genome.</title>
        <authorList>
            <person name="Kasahara Y."/>
            <person name="Nakai S."/>
            <person name="Lee S."/>
            <person name="Sadaie Y."/>
            <person name="Ogasawara N."/>
        </authorList>
    </citation>
    <scope>NUCLEOTIDE SEQUENCE [GENOMIC DNA]</scope>
    <source>
        <strain>168</strain>
    </source>
</reference>
<reference key="3">
    <citation type="journal article" date="1997" name="Nature">
        <title>The complete genome sequence of the Gram-positive bacterium Bacillus subtilis.</title>
        <authorList>
            <person name="Kunst F."/>
            <person name="Ogasawara N."/>
            <person name="Moszer I."/>
            <person name="Albertini A.M."/>
            <person name="Alloni G."/>
            <person name="Azevedo V."/>
            <person name="Bertero M.G."/>
            <person name="Bessieres P."/>
            <person name="Bolotin A."/>
            <person name="Borchert S."/>
            <person name="Borriss R."/>
            <person name="Boursier L."/>
            <person name="Brans A."/>
            <person name="Braun M."/>
            <person name="Brignell S.C."/>
            <person name="Bron S."/>
            <person name="Brouillet S."/>
            <person name="Bruschi C.V."/>
            <person name="Caldwell B."/>
            <person name="Capuano V."/>
            <person name="Carter N.M."/>
            <person name="Choi S.-K."/>
            <person name="Codani J.-J."/>
            <person name="Connerton I.F."/>
            <person name="Cummings N.J."/>
            <person name="Daniel R.A."/>
            <person name="Denizot F."/>
            <person name="Devine K.M."/>
            <person name="Duesterhoeft A."/>
            <person name="Ehrlich S.D."/>
            <person name="Emmerson P.T."/>
            <person name="Entian K.-D."/>
            <person name="Errington J."/>
            <person name="Fabret C."/>
            <person name="Ferrari E."/>
            <person name="Foulger D."/>
            <person name="Fritz C."/>
            <person name="Fujita M."/>
            <person name="Fujita Y."/>
            <person name="Fuma S."/>
            <person name="Galizzi A."/>
            <person name="Galleron N."/>
            <person name="Ghim S.-Y."/>
            <person name="Glaser P."/>
            <person name="Goffeau A."/>
            <person name="Golightly E.J."/>
            <person name="Grandi G."/>
            <person name="Guiseppi G."/>
            <person name="Guy B.J."/>
            <person name="Haga K."/>
            <person name="Haiech J."/>
            <person name="Harwood C.R."/>
            <person name="Henaut A."/>
            <person name="Hilbert H."/>
            <person name="Holsappel S."/>
            <person name="Hosono S."/>
            <person name="Hullo M.-F."/>
            <person name="Itaya M."/>
            <person name="Jones L.-M."/>
            <person name="Joris B."/>
            <person name="Karamata D."/>
            <person name="Kasahara Y."/>
            <person name="Klaerr-Blanchard M."/>
            <person name="Klein C."/>
            <person name="Kobayashi Y."/>
            <person name="Koetter P."/>
            <person name="Koningstein G."/>
            <person name="Krogh S."/>
            <person name="Kumano M."/>
            <person name="Kurita K."/>
            <person name="Lapidus A."/>
            <person name="Lardinois S."/>
            <person name="Lauber J."/>
            <person name="Lazarevic V."/>
            <person name="Lee S.-M."/>
            <person name="Levine A."/>
            <person name="Liu H."/>
            <person name="Masuda S."/>
            <person name="Mauel C."/>
            <person name="Medigue C."/>
            <person name="Medina N."/>
            <person name="Mellado R.P."/>
            <person name="Mizuno M."/>
            <person name="Moestl D."/>
            <person name="Nakai S."/>
            <person name="Noback M."/>
            <person name="Noone D."/>
            <person name="O'Reilly M."/>
            <person name="Ogawa K."/>
            <person name="Ogiwara A."/>
            <person name="Oudega B."/>
            <person name="Park S.-H."/>
            <person name="Parro V."/>
            <person name="Pohl T.M."/>
            <person name="Portetelle D."/>
            <person name="Porwollik S."/>
            <person name="Prescott A.M."/>
            <person name="Presecan E."/>
            <person name="Pujic P."/>
            <person name="Purnelle B."/>
            <person name="Rapoport G."/>
            <person name="Rey M."/>
            <person name="Reynolds S."/>
            <person name="Rieger M."/>
            <person name="Rivolta C."/>
            <person name="Rocha E."/>
            <person name="Roche B."/>
            <person name="Rose M."/>
            <person name="Sadaie Y."/>
            <person name="Sato T."/>
            <person name="Scanlan E."/>
            <person name="Schleich S."/>
            <person name="Schroeter R."/>
            <person name="Scoffone F."/>
            <person name="Sekiguchi J."/>
            <person name="Sekowska A."/>
            <person name="Seror S.J."/>
            <person name="Serror P."/>
            <person name="Shin B.-S."/>
            <person name="Soldo B."/>
            <person name="Sorokin A."/>
            <person name="Tacconi E."/>
            <person name="Takagi T."/>
            <person name="Takahashi H."/>
            <person name="Takemaru K."/>
            <person name="Takeuchi M."/>
            <person name="Tamakoshi A."/>
            <person name="Tanaka T."/>
            <person name="Terpstra P."/>
            <person name="Tognoni A."/>
            <person name="Tosato V."/>
            <person name="Uchiyama S."/>
            <person name="Vandenbol M."/>
            <person name="Vannier F."/>
            <person name="Vassarotti A."/>
            <person name="Viari A."/>
            <person name="Wambutt R."/>
            <person name="Wedler E."/>
            <person name="Wedler H."/>
            <person name="Weitzenegger T."/>
            <person name="Winters P."/>
            <person name="Wipat A."/>
            <person name="Yamamoto H."/>
            <person name="Yamane K."/>
            <person name="Yasumoto K."/>
            <person name="Yata K."/>
            <person name="Yoshida K."/>
            <person name="Yoshikawa H.-F."/>
            <person name="Zumstein E."/>
            <person name="Yoshikawa H."/>
            <person name="Danchin A."/>
        </authorList>
    </citation>
    <scope>NUCLEOTIDE SEQUENCE [LARGE SCALE GENOMIC DNA]</scope>
    <source>
        <strain>168</strain>
    </source>
</reference>
<accession>P96652</accession>
<protein>
    <recommendedName>
        <fullName>HTH-type transcriptional regulator LrpA</fullName>
    </recommendedName>
</protein>
<feature type="chain" id="PRO_0000111738" description="HTH-type transcriptional regulator LrpA">
    <location>
        <begin position="1"/>
        <end position="136"/>
    </location>
</feature>
<feature type="domain" description="HTH asnC-type" evidence="1">
    <location>
        <begin position="2"/>
        <end position="63"/>
    </location>
</feature>
<feature type="DNA-binding region" description="H-T-H motif" evidence="1">
    <location>
        <begin position="21"/>
        <end position="40"/>
    </location>
</feature>
<evidence type="ECO:0000255" key="1">
    <source>
        <dbReference type="PROSITE-ProRule" id="PRU00319"/>
    </source>
</evidence>
<evidence type="ECO:0000269" key="2">
    <source>
    </source>
</evidence>
<dbReference type="EMBL" id="L44122">
    <property type="protein sequence ID" value="AAR24605.1"/>
    <property type="molecule type" value="Genomic_DNA"/>
</dbReference>
<dbReference type="EMBL" id="AB001488">
    <property type="protein sequence ID" value="BAA19341.1"/>
    <property type="molecule type" value="Genomic_DNA"/>
</dbReference>
<dbReference type="EMBL" id="AL009126">
    <property type="protein sequence ID" value="CAB12312.1"/>
    <property type="molecule type" value="Genomic_DNA"/>
</dbReference>
<dbReference type="PIR" id="D69653">
    <property type="entry name" value="D69653"/>
</dbReference>
<dbReference type="RefSeq" id="NP_388386.1">
    <property type="nucleotide sequence ID" value="NC_000964.3"/>
</dbReference>
<dbReference type="RefSeq" id="WP_003246601.1">
    <property type="nucleotide sequence ID" value="NZ_OZ025638.1"/>
</dbReference>
<dbReference type="SMR" id="P96652"/>
<dbReference type="FunCoup" id="P96652">
    <property type="interactions" value="61"/>
</dbReference>
<dbReference type="STRING" id="224308.BSU05050"/>
<dbReference type="PaxDb" id="224308-BSU05050"/>
<dbReference type="EnsemblBacteria" id="CAB12312">
    <property type="protein sequence ID" value="CAB12312"/>
    <property type="gene ID" value="BSU_05050"/>
</dbReference>
<dbReference type="GeneID" id="938119"/>
<dbReference type="KEGG" id="bsu:BSU05050"/>
<dbReference type="PATRIC" id="fig|224308.179.peg.536"/>
<dbReference type="eggNOG" id="COG1522">
    <property type="taxonomic scope" value="Bacteria"/>
</dbReference>
<dbReference type="InParanoid" id="P96652"/>
<dbReference type="OrthoDB" id="34294at2"/>
<dbReference type="PhylomeDB" id="P96652"/>
<dbReference type="BioCyc" id="BSUB:BSU05050-MONOMER"/>
<dbReference type="Proteomes" id="UP000001570">
    <property type="component" value="Chromosome"/>
</dbReference>
<dbReference type="GO" id="GO:0005829">
    <property type="term" value="C:cytosol"/>
    <property type="evidence" value="ECO:0000318"/>
    <property type="project" value="GO_Central"/>
</dbReference>
<dbReference type="GO" id="GO:0043565">
    <property type="term" value="F:sequence-specific DNA binding"/>
    <property type="evidence" value="ECO:0000318"/>
    <property type="project" value="GO_Central"/>
</dbReference>
<dbReference type="GO" id="GO:0043200">
    <property type="term" value="P:response to amino acid"/>
    <property type="evidence" value="ECO:0000318"/>
    <property type="project" value="GO_Central"/>
</dbReference>
<dbReference type="Gene3D" id="3.30.70.920">
    <property type="match status" value="1"/>
</dbReference>
<dbReference type="Gene3D" id="1.10.10.10">
    <property type="entry name" value="Winged helix-like DNA-binding domain superfamily/Winged helix DNA-binding domain"/>
    <property type="match status" value="1"/>
</dbReference>
<dbReference type="InterPro" id="IPR000485">
    <property type="entry name" value="AsnC-type_HTH_dom"/>
</dbReference>
<dbReference type="InterPro" id="IPR011008">
    <property type="entry name" value="Dimeric_a/b-barrel"/>
</dbReference>
<dbReference type="InterPro" id="IPR019888">
    <property type="entry name" value="Tscrpt_reg_AsnC-like"/>
</dbReference>
<dbReference type="InterPro" id="IPR019887">
    <property type="entry name" value="Tscrpt_reg_AsnC/Lrp_C"/>
</dbReference>
<dbReference type="InterPro" id="IPR036388">
    <property type="entry name" value="WH-like_DNA-bd_sf"/>
</dbReference>
<dbReference type="InterPro" id="IPR036390">
    <property type="entry name" value="WH_DNA-bd_sf"/>
</dbReference>
<dbReference type="PANTHER" id="PTHR30154:SF55">
    <property type="entry name" value="HTH-TYPE TRANSCRIPTIONAL REGULATOR LRPB"/>
    <property type="match status" value="1"/>
</dbReference>
<dbReference type="PANTHER" id="PTHR30154">
    <property type="entry name" value="LEUCINE-RESPONSIVE REGULATORY PROTEIN"/>
    <property type="match status" value="1"/>
</dbReference>
<dbReference type="Pfam" id="PF01037">
    <property type="entry name" value="AsnC_trans_reg"/>
    <property type="match status" value="1"/>
</dbReference>
<dbReference type="Pfam" id="PF13412">
    <property type="entry name" value="HTH_24"/>
    <property type="match status" value="1"/>
</dbReference>
<dbReference type="PRINTS" id="PR00033">
    <property type="entry name" value="HTHASNC"/>
</dbReference>
<dbReference type="SMART" id="SM00344">
    <property type="entry name" value="HTH_ASNC"/>
    <property type="match status" value="1"/>
</dbReference>
<dbReference type="SUPFAM" id="SSF54909">
    <property type="entry name" value="Dimeric alpha+beta barrel"/>
    <property type="match status" value="1"/>
</dbReference>
<dbReference type="SUPFAM" id="SSF46785">
    <property type="entry name" value="Winged helix' DNA-binding domain"/>
    <property type="match status" value="1"/>
</dbReference>
<dbReference type="PROSITE" id="PS50956">
    <property type="entry name" value="HTH_ASNC_2"/>
    <property type="match status" value="1"/>
</dbReference>
<proteinExistence type="predicted"/>